<keyword id="KW-0002">3D-structure</keyword>
<keyword id="KW-0045">Antibiotic biosynthesis</keyword>
<keyword id="KW-1003">Cell membrane</keyword>
<keyword id="KW-0349">Heme</keyword>
<keyword id="KW-0408">Iron</keyword>
<keyword id="KW-0472">Membrane</keyword>
<keyword id="KW-0479">Metal-binding</keyword>
<keyword id="KW-0503">Monooxygenase</keyword>
<keyword id="KW-0560">Oxidoreductase</keyword>
<keyword id="KW-1185">Reference proteome</keyword>
<keyword id="KW-0812">Transmembrane</keyword>
<keyword id="KW-1133">Transmembrane helix</keyword>
<comment type="function">
    <text evidence="3">Involved in the metabolism of the antibiotic polyketide bacillaene which is involved in secondary metabolism. The substrate is dihydrobacillaene.</text>
</comment>
<comment type="pathway">
    <text>Antibiotic biosynthesis; bacillaene biosynthesis.</text>
</comment>
<comment type="subcellular location">
    <subcellularLocation>
        <location evidence="4">Cell membrane</location>
        <topology evidence="4">Single-pass membrane protein</topology>
    </subcellularLocation>
</comment>
<comment type="similarity">
    <text evidence="4">Belongs to the cytochrome P450 family.</text>
</comment>
<organism>
    <name type="scientific">Bacillus subtilis (strain 168)</name>
    <dbReference type="NCBI Taxonomy" id="224308"/>
    <lineage>
        <taxon>Bacteria</taxon>
        <taxon>Bacillati</taxon>
        <taxon>Bacillota</taxon>
        <taxon>Bacilli</taxon>
        <taxon>Bacillales</taxon>
        <taxon>Bacillaceae</taxon>
        <taxon>Bacillus</taxon>
    </lineage>
</organism>
<sequence>MEKLMFHPHGKEFHHNPFSVLGRFREEEPIHRFELKRFGATYPAWLITRYDDCMAFLKDNRITRDVKNVMNQEQIKMLNVSEDIDFVSDHMLAKDTPDHTRLRSLVHQAFTPRTIENLRGSIEQIAEQLLDEMEKENKADIMKSFASPLPFIVISELMGIPKEDRSQFQIWTNAMVDTSEGNRELTNQALREFKDYIAKLIHDRRIKPKDDLISKLVHAEENGSKLSEKELYSMLFLLVVAGLETTVNLLGSGTLALLQHKKECEKLKQQPEMIATAVEELLRYTSPVVMMANRWAIEDFTYKGHSIKRGDMIFIGIGSANRDPNFFENPEILNINRSPNRHISFGFGIHFCLGAPLARLEGHIAFKALLKRFPDIELAVAPDDIQWRKNVFLRGLESLPVSLSK</sequence>
<reference key="1">
    <citation type="journal article" date="1997" name="Nature">
        <title>The complete genome sequence of the Gram-positive bacterium Bacillus subtilis.</title>
        <authorList>
            <person name="Kunst F."/>
            <person name="Ogasawara N."/>
            <person name="Moszer I."/>
            <person name="Albertini A.M."/>
            <person name="Alloni G."/>
            <person name="Azevedo V."/>
            <person name="Bertero M.G."/>
            <person name="Bessieres P."/>
            <person name="Bolotin A."/>
            <person name="Borchert S."/>
            <person name="Borriss R."/>
            <person name="Boursier L."/>
            <person name="Brans A."/>
            <person name="Braun M."/>
            <person name="Brignell S.C."/>
            <person name="Bron S."/>
            <person name="Brouillet S."/>
            <person name="Bruschi C.V."/>
            <person name="Caldwell B."/>
            <person name="Capuano V."/>
            <person name="Carter N.M."/>
            <person name="Choi S.-K."/>
            <person name="Codani J.-J."/>
            <person name="Connerton I.F."/>
            <person name="Cummings N.J."/>
            <person name="Daniel R.A."/>
            <person name="Denizot F."/>
            <person name="Devine K.M."/>
            <person name="Duesterhoeft A."/>
            <person name="Ehrlich S.D."/>
            <person name="Emmerson P.T."/>
            <person name="Entian K.-D."/>
            <person name="Errington J."/>
            <person name="Fabret C."/>
            <person name="Ferrari E."/>
            <person name="Foulger D."/>
            <person name="Fritz C."/>
            <person name="Fujita M."/>
            <person name="Fujita Y."/>
            <person name="Fuma S."/>
            <person name="Galizzi A."/>
            <person name="Galleron N."/>
            <person name="Ghim S.-Y."/>
            <person name="Glaser P."/>
            <person name="Goffeau A."/>
            <person name="Golightly E.J."/>
            <person name="Grandi G."/>
            <person name="Guiseppi G."/>
            <person name="Guy B.J."/>
            <person name="Haga K."/>
            <person name="Haiech J."/>
            <person name="Harwood C.R."/>
            <person name="Henaut A."/>
            <person name="Hilbert H."/>
            <person name="Holsappel S."/>
            <person name="Hosono S."/>
            <person name="Hullo M.-F."/>
            <person name="Itaya M."/>
            <person name="Jones L.-M."/>
            <person name="Joris B."/>
            <person name="Karamata D."/>
            <person name="Kasahara Y."/>
            <person name="Klaerr-Blanchard M."/>
            <person name="Klein C."/>
            <person name="Kobayashi Y."/>
            <person name="Koetter P."/>
            <person name="Koningstein G."/>
            <person name="Krogh S."/>
            <person name="Kumano M."/>
            <person name="Kurita K."/>
            <person name="Lapidus A."/>
            <person name="Lardinois S."/>
            <person name="Lauber J."/>
            <person name="Lazarevic V."/>
            <person name="Lee S.-M."/>
            <person name="Levine A."/>
            <person name="Liu H."/>
            <person name="Masuda S."/>
            <person name="Mauel C."/>
            <person name="Medigue C."/>
            <person name="Medina N."/>
            <person name="Mellado R.P."/>
            <person name="Mizuno M."/>
            <person name="Moestl D."/>
            <person name="Nakai S."/>
            <person name="Noback M."/>
            <person name="Noone D."/>
            <person name="O'Reilly M."/>
            <person name="Ogawa K."/>
            <person name="Ogiwara A."/>
            <person name="Oudega B."/>
            <person name="Park S.-H."/>
            <person name="Parro V."/>
            <person name="Pohl T.M."/>
            <person name="Portetelle D."/>
            <person name="Porwollik S."/>
            <person name="Prescott A.M."/>
            <person name="Presecan E."/>
            <person name="Pujic P."/>
            <person name="Purnelle B."/>
            <person name="Rapoport G."/>
            <person name="Rey M."/>
            <person name="Reynolds S."/>
            <person name="Rieger M."/>
            <person name="Rivolta C."/>
            <person name="Rocha E."/>
            <person name="Roche B."/>
            <person name="Rose M."/>
            <person name="Sadaie Y."/>
            <person name="Sato T."/>
            <person name="Scanlan E."/>
            <person name="Schleich S."/>
            <person name="Schroeter R."/>
            <person name="Scoffone F."/>
            <person name="Sekiguchi J."/>
            <person name="Sekowska A."/>
            <person name="Seror S.J."/>
            <person name="Serror P."/>
            <person name="Shin B.-S."/>
            <person name="Soldo B."/>
            <person name="Sorokin A."/>
            <person name="Tacconi E."/>
            <person name="Takagi T."/>
            <person name="Takahashi H."/>
            <person name="Takemaru K."/>
            <person name="Takeuchi M."/>
            <person name="Tamakoshi A."/>
            <person name="Tanaka T."/>
            <person name="Terpstra P."/>
            <person name="Tognoni A."/>
            <person name="Tosato V."/>
            <person name="Uchiyama S."/>
            <person name="Vandenbol M."/>
            <person name="Vannier F."/>
            <person name="Vassarotti A."/>
            <person name="Viari A."/>
            <person name="Wambutt R."/>
            <person name="Wedler E."/>
            <person name="Wedler H."/>
            <person name="Weitzenegger T."/>
            <person name="Winters P."/>
            <person name="Wipat A."/>
            <person name="Yamamoto H."/>
            <person name="Yamane K."/>
            <person name="Yasumoto K."/>
            <person name="Yata K."/>
            <person name="Yoshida K."/>
            <person name="Yoshikawa H.-F."/>
            <person name="Zumstein E."/>
            <person name="Yoshikawa H."/>
            <person name="Danchin A."/>
        </authorList>
    </citation>
    <scope>NUCLEOTIDE SEQUENCE [LARGE SCALE GENOMIC DNA]</scope>
    <source>
        <strain>168</strain>
    </source>
</reference>
<reference key="2">
    <citation type="journal article" date="2009" name="Microbiology">
        <title>From a consortium sequence to a unified sequence: the Bacillus subtilis 168 reference genome a decade later.</title>
        <authorList>
            <person name="Barbe V."/>
            <person name="Cruveiller S."/>
            <person name="Kunst F."/>
            <person name="Lenoble P."/>
            <person name="Meurice G."/>
            <person name="Sekowska A."/>
            <person name="Vallenet D."/>
            <person name="Wang T."/>
            <person name="Moszer I."/>
            <person name="Medigue C."/>
            <person name="Danchin A."/>
        </authorList>
    </citation>
    <scope>SEQUENCE REVISION TO C-TERMINUS</scope>
</reference>
<reference key="3">
    <citation type="journal article" date="2007" name="Biochem. Biophys. Res. Commun.">
        <title>PksS from Bacillus subtilis is a cytochrome P450 involved in bacillaene metabolism.</title>
        <authorList>
            <person name="Reddick J.J."/>
            <person name="Antolak S.A."/>
            <person name="Raner G.M."/>
        </authorList>
    </citation>
    <scope>FUNCTION</scope>
    <scope>SUBSTRATE SPECIFICITY</scope>
    <source>
        <strain>168</strain>
    </source>
</reference>
<feature type="chain" id="PRO_0000380708" description="Polyketide biosynthesis cytochrome P450 PksS">
    <location>
        <begin position="1"/>
        <end position="405"/>
    </location>
</feature>
<feature type="transmembrane region" description="Helical" evidence="2">
    <location>
        <begin position="231"/>
        <end position="251"/>
    </location>
</feature>
<feature type="binding site" description="axial binding residue" evidence="1">
    <location>
        <position position="352"/>
    </location>
    <ligand>
        <name>heme</name>
        <dbReference type="ChEBI" id="CHEBI:30413"/>
    </ligand>
    <ligandPart>
        <name>Fe</name>
        <dbReference type="ChEBI" id="CHEBI:18248"/>
    </ligandPart>
</feature>
<feature type="helix" evidence="5">
    <location>
        <begin position="11"/>
        <end position="15"/>
    </location>
</feature>
<feature type="helix" evidence="5">
    <location>
        <begin position="17"/>
        <end position="27"/>
    </location>
</feature>
<feature type="strand" evidence="5">
    <location>
        <begin position="29"/>
        <end position="35"/>
    </location>
</feature>
<feature type="strand" evidence="5">
    <location>
        <begin position="42"/>
        <end position="47"/>
    </location>
</feature>
<feature type="helix" evidence="5">
    <location>
        <begin position="50"/>
        <end position="58"/>
    </location>
</feature>
<feature type="strand" evidence="5">
    <location>
        <begin position="62"/>
        <end position="64"/>
    </location>
</feature>
<feature type="helix" evidence="5">
    <location>
        <begin position="66"/>
        <end position="69"/>
    </location>
</feature>
<feature type="helix" evidence="5">
    <location>
        <begin position="85"/>
        <end position="88"/>
    </location>
</feature>
<feature type="helix" evidence="5">
    <location>
        <begin position="91"/>
        <end position="93"/>
    </location>
</feature>
<feature type="helix" evidence="5">
    <location>
        <begin position="98"/>
        <end position="106"/>
    </location>
</feature>
<feature type="helix" evidence="5">
    <location>
        <begin position="107"/>
        <end position="110"/>
    </location>
</feature>
<feature type="helix" evidence="5">
    <location>
        <begin position="112"/>
        <end position="116"/>
    </location>
</feature>
<feature type="helix" evidence="5">
    <location>
        <begin position="119"/>
        <end position="133"/>
    </location>
</feature>
<feature type="strand" evidence="5">
    <location>
        <begin position="136"/>
        <end position="140"/>
    </location>
</feature>
<feature type="helix" evidence="5">
    <location>
        <begin position="141"/>
        <end position="144"/>
    </location>
</feature>
<feature type="turn" evidence="5">
    <location>
        <begin position="145"/>
        <end position="147"/>
    </location>
</feature>
<feature type="helix" evidence="5">
    <location>
        <begin position="148"/>
        <end position="158"/>
    </location>
</feature>
<feature type="helix" evidence="5">
    <location>
        <begin position="162"/>
        <end position="164"/>
    </location>
</feature>
<feature type="helix" evidence="5">
    <location>
        <begin position="165"/>
        <end position="175"/>
    </location>
</feature>
<feature type="helix" evidence="5">
    <location>
        <begin position="180"/>
        <end position="182"/>
    </location>
</feature>
<feature type="helix" evidence="5">
    <location>
        <begin position="183"/>
        <end position="206"/>
    </location>
</feature>
<feature type="helix" evidence="5">
    <location>
        <begin position="212"/>
        <end position="218"/>
    </location>
</feature>
<feature type="helix" evidence="5">
    <location>
        <begin position="228"/>
        <end position="259"/>
    </location>
</feature>
<feature type="helix" evidence="5">
    <location>
        <begin position="261"/>
        <end position="269"/>
    </location>
</feature>
<feature type="helix" evidence="5">
    <location>
        <begin position="271"/>
        <end position="273"/>
    </location>
</feature>
<feature type="helix" evidence="5">
    <location>
        <begin position="274"/>
        <end position="285"/>
    </location>
</feature>
<feature type="strand" evidence="5">
    <location>
        <begin position="295"/>
        <end position="298"/>
    </location>
</feature>
<feature type="strand" evidence="5">
    <location>
        <begin position="300"/>
        <end position="302"/>
    </location>
</feature>
<feature type="strand" evidence="5">
    <location>
        <begin position="305"/>
        <end position="307"/>
    </location>
</feature>
<feature type="strand" evidence="5">
    <location>
        <begin position="312"/>
        <end position="315"/>
    </location>
</feature>
<feature type="helix" evidence="5">
    <location>
        <begin position="317"/>
        <end position="320"/>
    </location>
</feature>
<feature type="turn" evidence="5">
    <location>
        <begin position="324"/>
        <end position="326"/>
    </location>
</feature>
<feature type="strand" evidence="5">
    <location>
        <begin position="327"/>
        <end position="329"/>
    </location>
</feature>
<feature type="helix" evidence="5">
    <location>
        <begin position="355"/>
        <end position="372"/>
    </location>
</feature>
<feature type="helix" evidence="5">
    <location>
        <begin position="382"/>
        <end position="384"/>
    </location>
</feature>
<feature type="strand" evidence="5">
    <location>
        <begin position="391"/>
        <end position="393"/>
    </location>
</feature>
<feature type="strand" evidence="5">
    <location>
        <begin position="400"/>
        <end position="402"/>
    </location>
</feature>
<evidence type="ECO:0000250" key="1"/>
<evidence type="ECO:0000255" key="2"/>
<evidence type="ECO:0000269" key="3">
    <source>
    </source>
</evidence>
<evidence type="ECO:0000305" key="4"/>
<evidence type="ECO:0007829" key="5">
    <source>
        <dbReference type="PDB" id="4YZR"/>
    </source>
</evidence>
<proteinExistence type="evidence at protein level"/>
<accession>O31785</accession>
<gene>
    <name type="primary">pksS</name>
    <name type="ordered locus">BSU17230</name>
</gene>
<protein>
    <recommendedName>
        <fullName>Polyketide biosynthesis cytochrome P450 PksS</fullName>
        <ecNumber>1.14.-.-</ecNumber>
    </recommendedName>
</protein>
<dbReference type="EC" id="1.14.-.-"/>
<dbReference type="EMBL" id="AL009126">
    <property type="protein sequence ID" value="CAB13607.2"/>
    <property type="molecule type" value="Genomic_DNA"/>
</dbReference>
<dbReference type="RefSeq" id="NP_389605.2">
    <property type="nucleotide sequence ID" value="NC_000964.3"/>
</dbReference>
<dbReference type="RefSeq" id="WP_003244857.1">
    <property type="nucleotide sequence ID" value="NZ_OZ025638.1"/>
</dbReference>
<dbReference type="PDB" id="4YZR">
    <property type="method" value="X-ray"/>
    <property type="resolution" value="1.35 A"/>
    <property type="chains" value="A=1-405"/>
</dbReference>
<dbReference type="PDBsum" id="4YZR"/>
<dbReference type="SMR" id="O31785"/>
<dbReference type="FunCoup" id="O31785">
    <property type="interactions" value="172"/>
</dbReference>
<dbReference type="STRING" id="224308.BSU17230"/>
<dbReference type="PaxDb" id="224308-BSU17230"/>
<dbReference type="EnsemblBacteria" id="CAB13607">
    <property type="protein sequence ID" value="CAB13607"/>
    <property type="gene ID" value="BSU_17230"/>
</dbReference>
<dbReference type="GeneID" id="940046"/>
<dbReference type="KEGG" id="bsu:BSU17230"/>
<dbReference type="PATRIC" id="fig|224308.179.peg.1868"/>
<dbReference type="eggNOG" id="COG2124">
    <property type="taxonomic scope" value="Bacteria"/>
</dbReference>
<dbReference type="InParanoid" id="O31785"/>
<dbReference type="OrthoDB" id="9801155at2"/>
<dbReference type="PhylomeDB" id="O31785"/>
<dbReference type="BioCyc" id="BSUB:BSU17230-MONOMER"/>
<dbReference type="UniPathway" id="UPA01003"/>
<dbReference type="Proteomes" id="UP000001570">
    <property type="component" value="Chromosome"/>
</dbReference>
<dbReference type="GO" id="GO:0005886">
    <property type="term" value="C:plasma membrane"/>
    <property type="evidence" value="ECO:0007669"/>
    <property type="project" value="UniProtKB-SubCell"/>
</dbReference>
<dbReference type="GO" id="GO:0020037">
    <property type="term" value="F:heme binding"/>
    <property type="evidence" value="ECO:0000318"/>
    <property type="project" value="GO_Central"/>
</dbReference>
<dbReference type="GO" id="GO:0005506">
    <property type="term" value="F:iron ion binding"/>
    <property type="evidence" value="ECO:0007669"/>
    <property type="project" value="InterPro"/>
</dbReference>
<dbReference type="GO" id="GO:0004497">
    <property type="term" value="F:monooxygenase activity"/>
    <property type="evidence" value="ECO:0000318"/>
    <property type="project" value="GO_Central"/>
</dbReference>
<dbReference type="GO" id="GO:0016705">
    <property type="term" value="F:oxidoreductase activity, acting on paired donors, with incorporation or reduction of molecular oxygen"/>
    <property type="evidence" value="ECO:0007669"/>
    <property type="project" value="InterPro"/>
</dbReference>
<dbReference type="GO" id="GO:0017000">
    <property type="term" value="P:antibiotic biosynthetic process"/>
    <property type="evidence" value="ECO:0007669"/>
    <property type="project" value="UniProtKB-KW"/>
</dbReference>
<dbReference type="CDD" id="cd11029">
    <property type="entry name" value="CYP107-like"/>
    <property type="match status" value="1"/>
</dbReference>
<dbReference type="FunFam" id="1.10.630.10:FF:000018">
    <property type="entry name" value="Cytochrome P450 monooxygenase"/>
    <property type="match status" value="1"/>
</dbReference>
<dbReference type="Gene3D" id="1.10.630.10">
    <property type="entry name" value="Cytochrome P450"/>
    <property type="match status" value="1"/>
</dbReference>
<dbReference type="InterPro" id="IPR001128">
    <property type="entry name" value="Cyt_P450"/>
</dbReference>
<dbReference type="InterPro" id="IPR002397">
    <property type="entry name" value="Cyt_P450_B"/>
</dbReference>
<dbReference type="InterPro" id="IPR017972">
    <property type="entry name" value="Cyt_P450_CS"/>
</dbReference>
<dbReference type="InterPro" id="IPR036396">
    <property type="entry name" value="Cyt_P450_sf"/>
</dbReference>
<dbReference type="PANTHER" id="PTHR46696:SF1">
    <property type="entry name" value="CYTOCHROME P450 YJIB-RELATED"/>
    <property type="match status" value="1"/>
</dbReference>
<dbReference type="PANTHER" id="PTHR46696">
    <property type="entry name" value="P450, PUTATIVE (EUROFUNG)-RELATED"/>
    <property type="match status" value="1"/>
</dbReference>
<dbReference type="Pfam" id="PF00067">
    <property type="entry name" value="p450"/>
    <property type="match status" value="1"/>
</dbReference>
<dbReference type="PRINTS" id="PR00359">
    <property type="entry name" value="BP450"/>
</dbReference>
<dbReference type="SUPFAM" id="SSF48264">
    <property type="entry name" value="Cytochrome P450"/>
    <property type="match status" value="1"/>
</dbReference>
<dbReference type="PROSITE" id="PS00086">
    <property type="entry name" value="CYTOCHROME_P450"/>
    <property type="match status" value="1"/>
</dbReference>
<name>PKSS_BACSU</name>